<comment type="function">
    <text evidence="1">Binds to actin and affects the structure of the cytoskeleton. At high concentrations, profilin prevents the polymerization of actin, whereas it enhances it at low concentrations (By similarity).</text>
</comment>
<comment type="subunit">
    <text evidence="1">Occurs in many kinds of cells as a complex with monomeric actin in a 1:1 ratio.</text>
</comment>
<comment type="subcellular location">
    <subcellularLocation>
        <location evidence="1">Cytoplasm</location>
        <location evidence="1">Cytoskeleton</location>
    </subcellularLocation>
</comment>
<comment type="PTM">
    <text evidence="1">Phosphorylated by MAP kinases.</text>
</comment>
<comment type="polymorphism">
    <text>Several isoforms of the allergen exist due to polymorphism.</text>
</comment>
<comment type="allergen">
    <text>Causes an allergic reaction in human.</text>
</comment>
<comment type="miscellaneous">
    <text evidence="3">The variability of the residues taking part of IgE-binding epitopes might be responsible of the difference in cross-reactivity among olive pollen cultivars, and between distantly related pollen species, leading to a variable range of allergy reactions among atopic patients.</text>
</comment>
<comment type="similarity">
    <text evidence="2">Belongs to the profilin family.</text>
</comment>
<accession>A4GDQ8</accession>
<proteinExistence type="evidence at protein level"/>
<protein>
    <recommendedName>
        <fullName>Profilin-4</fullName>
    </recommendedName>
    <alternativeName>
        <fullName>Pollen allergen Ole e 2</fullName>
    </alternativeName>
    <allergenName>Ole e 2</allergenName>
</protein>
<reference key="1">
    <citation type="journal article" date="2012" name="PLoS ONE">
        <title>Characterization of profilin polymorphism in pollen with a focus on multifunctionality.</title>
        <authorList>
            <person name="Jimenez-Lopez J.C."/>
            <person name="Morales S."/>
            <person name="Castro A.J."/>
            <person name="Volkmann D."/>
            <person name="Rodriguez-Garcia M.I."/>
            <person name="Alche Jde D."/>
        </authorList>
    </citation>
    <scope>NUCLEOTIDE SEQUENCE [MRNA]</scope>
    <scope>POLYMORPHISM</scope>
    <source>
        <strain>cv. Manzanilla de Sevilla</strain>
    </source>
</reference>
<reference key="2">
    <citation type="journal article" date="2013" name="PLoS ONE">
        <title>Analysis of the effects of polymorphism on pollen profilin structural functionality and the generation of conformational, T- and B-cell epitopes.</title>
        <authorList>
            <person name="Jimenez-Lopez J.C."/>
            <person name="Rodriguez-Garcia M.I."/>
            <person name="Alche J.D."/>
        </authorList>
    </citation>
    <scope>3D-STRUCTURE MODELING</scope>
    <scope>DISULFIDE BOND</scope>
</reference>
<dbReference type="EMBL" id="DQ138326">
    <property type="protein sequence ID" value="AAZ30404.1"/>
    <property type="molecule type" value="mRNA"/>
</dbReference>
<dbReference type="SMR" id="A4GDQ8"/>
<dbReference type="Allergome" id="490">
    <property type="allergen name" value="Ole e 2"/>
</dbReference>
<dbReference type="GO" id="GO:0005938">
    <property type="term" value="C:cell cortex"/>
    <property type="evidence" value="ECO:0007669"/>
    <property type="project" value="TreeGrafter"/>
</dbReference>
<dbReference type="GO" id="GO:0005856">
    <property type="term" value="C:cytoskeleton"/>
    <property type="evidence" value="ECO:0007669"/>
    <property type="project" value="UniProtKB-SubCell"/>
</dbReference>
<dbReference type="GO" id="GO:0003785">
    <property type="term" value="F:actin monomer binding"/>
    <property type="evidence" value="ECO:0007669"/>
    <property type="project" value="TreeGrafter"/>
</dbReference>
<dbReference type="CDD" id="cd00148">
    <property type="entry name" value="PROF"/>
    <property type="match status" value="1"/>
</dbReference>
<dbReference type="FunFam" id="3.30.450.30:FF:000001">
    <property type="entry name" value="Profilin"/>
    <property type="match status" value="1"/>
</dbReference>
<dbReference type="Gene3D" id="3.30.450.30">
    <property type="entry name" value="Dynein light chain 2a, cytoplasmic"/>
    <property type="match status" value="1"/>
</dbReference>
<dbReference type="InterPro" id="IPR048278">
    <property type="entry name" value="PFN"/>
</dbReference>
<dbReference type="InterPro" id="IPR005455">
    <property type="entry name" value="PFN_euk"/>
</dbReference>
<dbReference type="InterPro" id="IPR036140">
    <property type="entry name" value="PFN_sf"/>
</dbReference>
<dbReference type="InterPro" id="IPR027310">
    <property type="entry name" value="Profilin_CS"/>
</dbReference>
<dbReference type="PANTHER" id="PTHR11604">
    <property type="entry name" value="PROFILIN"/>
    <property type="match status" value="1"/>
</dbReference>
<dbReference type="PANTHER" id="PTHR11604:SF25">
    <property type="entry name" value="PROFILIN-5"/>
    <property type="match status" value="1"/>
</dbReference>
<dbReference type="Pfam" id="PF00235">
    <property type="entry name" value="Profilin"/>
    <property type="match status" value="1"/>
</dbReference>
<dbReference type="PRINTS" id="PR00392">
    <property type="entry name" value="PROFILIN"/>
</dbReference>
<dbReference type="PRINTS" id="PR01640">
    <property type="entry name" value="PROFILINPLNT"/>
</dbReference>
<dbReference type="SMART" id="SM00392">
    <property type="entry name" value="PROF"/>
    <property type="match status" value="1"/>
</dbReference>
<dbReference type="SUPFAM" id="SSF55770">
    <property type="entry name" value="Profilin (actin-binding protein)"/>
    <property type="match status" value="1"/>
</dbReference>
<dbReference type="PROSITE" id="PS00414">
    <property type="entry name" value="PROFILIN"/>
    <property type="match status" value="1"/>
</dbReference>
<organism>
    <name type="scientific">Olea europaea</name>
    <name type="common">Common olive</name>
    <dbReference type="NCBI Taxonomy" id="4146"/>
    <lineage>
        <taxon>Eukaryota</taxon>
        <taxon>Viridiplantae</taxon>
        <taxon>Streptophyta</taxon>
        <taxon>Embryophyta</taxon>
        <taxon>Tracheophyta</taxon>
        <taxon>Spermatophyta</taxon>
        <taxon>Magnoliopsida</taxon>
        <taxon>eudicotyledons</taxon>
        <taxon>Gunneridae</taxon>
        <taxon>Pentapetalae</taxon>
        <taxon>asterids</taxon>
        <taxon>lamiids</taxon>
        <taxon>Lamiales</taxon>
        <taxon>Oleaceae</taxon>
        <taxon>Oleeae</taxon>
        <taxon>Olea</taxon>
    </lineage>
</organism>
<feature type="initiator methionine" description="Removed" evidence="1">
    <location>
        <position position="1"/>
    </location>
</feature>
<feature type="chain" id="PRO_0000425003" description="Profilin-4">
    <location>
        <begin position="2"/>
        <end position="134"/>
    </location>
</feature>
<feature type="short sequence motif" description="Involved in PIP2 interaction">
    <location>
        <begin position="84"/>
        <end position="100"/>
    </location>
</feature>
<feature type="modified residue" description="Phosphothreonine" evidence="1">
    <location>
        <position position="114"/>
    </location>
</feature>
<feature type="disulfide bond" evidence="3">
    <location>
        <begin position="13"/>
        <end position="118"/>
    </location>
</feature>
<keyword id="KW-0009">Actin-binding</keyword>
<keyword id="KW-0020">Allergen</keyword>
<keyword id="KW-0963">Cytoplasm</keyword>
<keyword id="KW-0206">Cytoskeleton</keyword>
<keyword id="KW-1015">Disulfide bond</keyword>
<keyword id="KW-0597">Phosphoprotein</keyword>
<sequence length="134" mass="14484">MSWQAYVDDHLMCDIEGHEDHRLTAAAIVGHDGSVWAQSATFPQFKPEEMNGIMTDFNEPGHLAPTGLHLGGTKYMVIQGEAGAVIRGKKGSGGITIKKTGQALVFGIYKEPVTPGQCNMVVERLGDYLLEQGL</sequence>
<name>PROAL_OLEEU</name>
<evidence type="ECO:0000250" key="1"/>
<evidence type="ECO:0000305" key="2"/>
<evidence type="ECO:0000305" key="3">
    <source>
    </source>
</evidence>